<accession>D0CCT2</accession>
<reference key="1">
    <citation type="journal article" date="2012" name="PLoS ONE">
        <title>The success of Acinetobacter species; genetic, metabolic and virulence attributes.</title>
        <authorList>
            <person name="Peleg A.Y."/>
            <person name="de Breij A."/>
            <person name="Adams M.D."/>
            <person name="Cerqueira G.M."/>
            <person name="Mocali S."/>
            <person name="Galardini M."/>
            <person name="Nibbering P.H."/>
            <person name="Earl A.M."/>
            <person name="Ward D.V."/>
            <person name="Paterson D.L."/>
            <person name="Seifert H."/>
            <person name="Dijkshoorn L."/>
        </authorList>
    </citation>
    <scope>NUCLEOTIDE SEQUENCE [LARGE SCALE GENOMIC DNA]</scope>
    <source>
        <strain>ATCC 19606 / DSM 30007 / JCM 6841 / CCUG 19606 / CIP 70.34 / NBRC 109757 / NCIMB 12457 / NCTC 12156 / 81</strain>
    </source>
</reference>
<reference key="2">
    <citation type="journal article" date="2009" name="Antimicrob. Agents Chemother.">
        <title>CraA, a major facilitator superfamily efflux pump associated with chloramphenicol resistance in Acinetobacter baumannii.</title>
        <authorList>
            <person name="Roca I."/>
            <person name="Marti S."/>
            <person name="Espinal P."/>
            <person name="Martinez P."/>
            <person name="Gibert I."/>
            <person name="Vila J."/>
        </authorList>
    </citation>
    <scope>FUNCTION IN CHLORAMPHENICOL RESISTANCE</scope>
    <scope>DISRUPTION PHENOTYPE</scope>
    <source>
        <strain>ATCC 19606 / DSM 30007 / JCM 6841 / CCUG 19606 / CIP 70.34 / NBRC 109757 / NCIMB 12457 / NCTC 12156 / 81</strain>
    </source>
</reference>
<dbReference type="EMBL" id="GG704576">
    <property type="protein sequence ID" value="EEX02869.1"/>
    <property type="molecule type" value="Genomic_DNA"/>
</dbReference>
<dbReference type="SMR" id="D0CCT2"/>
<dbReference type="TCDB" id="2.A.1.2.51">
    <property type="family name" value="the major facilitator superfamily (mfs)"/>
</dbReference>
<dbReference type="Proteomes" id="UP000005740">
    <property type="component" value="Unassembled WGS sequence"/>
</dbReference>
<dbReference type="GO" id="GO:0005886">
    <property type="term" value="C:plasma membrane"/>
    <property type="evidence" value="ECO:0007669"/>
    <property type="project" value="UniProtKB-SubCell"/>
</dbReference>
<dbReference type="GO" id="GO:0022857">
    <property type="term" value="F:transmembrane transporter activity"/>
    <property type="evidence" value="ECO:0007669"/>
    <property type="project" value="InterPro"/>
</dbReference>
<dbReference type="GO" id="GO:0046677">
    <property type="term" value="P:response to antibiotic"/>
    <property type="evidence" value="ECO:0007669"/>
    <property type="project" value="UniProtKB-KW"/>
</dbReference>
<dbReference type="Gene3D" id="1.20.1720.10">
    <property type="entry name" value="Multidrug resistance protein D"/>
    <property type="match status" value="1"/>
</dbReference>
<dbReference type="InterPro" id="IPR011701">
    <property type="entry name" value="MFS"/>
</dbReference>
<dbReference type="InterPro" id="IPR020846">
    <property type="entry name" value="MFS_dom"/>
</dbReference>
<dbReference type="InterPro" id="IPR036259">
    <property type="entry name" value="MFS_trans_sf"/>
</dbReference>
<dbReference type="InterPro" id="IPR005829">
    <property type="entry name" value="Sugar_transporter_CS"/>
</dbReference>
<dbReference type="PANTHER" id="PTHR43271">
    <property type="entry name" value="BLL2771 PROTEIN"/>
    <property type="match status" value="1"/>
</dbReference>
<dbReference type="PANTHER" id="PTHR43271:SF2">
    <property type="entry name" value="BLL2771 PROTEIN"/>
    <property type="match status" value="1"/>
</dbReference>
<dbReference type="Pfam" id="PF07690">
    <property type="entry name" value="MFS_1"/>
    <property type="match status" value="1"/>
</dbReference>
<dbReference type="SUPFAM" id="SSF103473">
    <property type="entry name" value="MFS general substrate transporter"/>
    <property type="match status" value="1"/>
</dbReference>
<dbReference type="PROSITE" id="PS50850">
    <property type="entry name" value="MFS"/>
    <property type="match status" value="1"/>
</dbReference>
<feature type="chain" id="PRO_0000445960" description="Chloramphenicol resistance protein CraA">
    <location>
        <begin position="1"/>
        <end position="413"/>
    </location>
</feature>
<feature type="transmembrane region" description="Helical" evidence="1">
    <location>
        <begin position="18"/>
        <end position="38"/>
    </location>
</feature>
<feature type="transmembrane region" description="Helical" evidence="1">
    <location>
        <begin position="55"/>
        <end position="75"/>
    </location>
</feature>
<feature type="transmembrane region" description="Helical" evidence="1">
    <location>
        <begin position="84"/>
        <end position="104"/>
    </location>
</feature>
<feature type="transmembrane region" description="Helical" evidence="1">
    <location>
        <begin position="110"/>
        <end position="130"/>
    </location>
</feature>
<feature type="transmembrane region" description="Helical" evidence="1">
    <location>
        <begin position="147"/>
        <end position="167"/>
    </location>
</feature>
<feature type="transmembrane region" description="Helical" evidence="1">
    <location>
        <begin position="170"/>
        <end position="190"/>
    </location>
</feature>
<feature type="transmembrane region" description="Helical" evidence="1">
    <location>
        <begin position="228"/>
        <end position="248"/>
    </location>
</feature>
<feature type="transmembrane region" description="Helical" evidence="1">
    <location>
        <begin position="260"/>
        <end position="280"/>
    </location>
</feature>
<feature type="transmembrane region" description="Helical" evidence="1">
    <location>
        <begin position="289"/>
        <end position="309"/>
    </location>
</feature>
<feature type="transmembrane region" description="Helical" evidence="1">
    <location>
        <begin position="312"/>
        <end position="332"/>
    </location>
</feature>
<feature type="transmembrane region" description="Helical" evidence="1">
    <location>
        <begin position="349"/>
        <end position="369"/>
    </location>
</feature>
<feature type="transmembrane region" description="Helical" evidence="1">
    <location>
        <begin position="373"/>
        <end position="393"/>
    </location>
</feature>
<keyword id="KW-0046">Antibiotic resistance</keyword>
<keyword id="KW-0997">Cell inner membrane</keyword>
<keyword id="KW-1003">Cell membrane</keyword>
<keyword id="KW-0472">Membrane</keyword>
<keyword id="KW-1185">Reference proteome</keyword>
<keyword id="KW-0812">Transmembrane</keyword>
<keyword id="KW-1133">Transmembrane helix</keyword>
<keyword id="KW-0813">Transport</keyword>
<organism>
    <name type="scientific">Acinetobacter baumannii (strain ATCC 19606 / DSM 30007 / JCM 6841 / CCUG 19606 / CIP 70.34 / NBRC 109757 / NCIMB 12457 / NCTC 12156 / 81)</name>
    <dbReference type="NCBI Taxonomy" id="575584"/>
    <lineage>
        <taxon>Bacteria</taxon>
        <taxon>Pseudomonadati</taxon>
        <taxon>Pseudomonadota</taxon>
        <taxon>Gammaproteobacteria</taxon>
        <taxon>Moraxellales</taxon>
        <taxon>Moraxellaceae</taxon>
        <taxon>Acinetobacter</taxon>
        <taxon>Acinetobacter calcoaceticus/baumannii complex</taxon>
    </lineage>
</organism>
<gene>
    <name evidence="3" type="primary">craA</name>
    <name evidence="5" type="synonym">cmr</name>
    <name evidence="5" type="ORF">HMPREF0010_02562</name>
</gene>
<proteinExistence type="evidence at protein level"/>
<name>CRAA_ACIB2</name>
<protein>
    <recommendedName>
        <fullName evidence="4">Chloramphenicol resistance protein CraA</fullName>
    </recommendedName>
</protein>
<sequence length="413" mass="45882">MYKLMKNIQTTALNRTTLMFPLALVLFEFAVYIGNDLIQPAMLAITEDFGVSATWAPSSMSFYLLGGASVAWLLGPLSDRLGRKKVLLSGVLFFALCCFLILLTRQIEHFLTLRFLQGIGLSVISAVGYAAIQENFAERDAIKVMALMANISLLAPLLGPVLGAFLIDYVSWHWGFVAIALLALLSWVGLKKQMPSHKVSVTKQPFSYLFDDFKKVFSNRQFLGLTLALPLVGMPLMLWIALSPIILVDELKLTSVQYGLAQFPVFLGLIVGNIVLIKIIDRLALGKTVLIGLPIMLTGTLILILGVVWQAYLIPCLLIGMTLICFGEGISFSVLYRFALMSSEVSKGTVAAAVSMLLMTSFFAMIELVRYLYTQFHLWAFVLSAFAFIALWFTQPRLALKREMQERVAQDLH</sequence>
<evidence type="ECO:0000255" key="1"/>
<evidence type="ECO:0000269" key="2">
    <source>
    </source>
</evidence>
<evidence type="ECO:0000303" key="3">
    <source>
    </source>
</evidence>
<evidence type="ECO:0000305" key="4"/>
<evidence type="ECO:0000312" key="5">
    <source>
        <dbReference type="EMBL" id="EEX02869.1"/>
    </source>
</evidence>
<comment type="function">
    <text evidence="2">Efflux pump that mediates resistance to chloramphenicol.</text>
</comment>
<comment type="subcellular location">
    <subcellularLocation>
        <location evidence="4">Cell inner membrane</location>
        <topology evidence="1">Multi-pass membrane protein</topology>
    </subcellularLocation>
</comment>
<comment type="disruption phenotype">
    <text evidence="2">Mutant shows a strong decrease in chloramphenicol resistance. Mutation does not affect susceptibility to quinolones, tetracyclines, aminoglycosides and imipenem.</text>
</comment>
<comment type="similarity">
    <text evidence="4">Belongs to the major facilitator superfamily.</text>
</comment>